<keyword id="KW-0963">Cytoplasm</keyword>
<keyword id="KW-0520">NAD</keyword>
<keyword id="KW-0521">NADP</keyword>
<keyword id="KW-0560">Oxidoreductase</keyword>
<reference key="1">
    <citation type="journal article" date="2011" name="Proc. Natl. Acad. Sci. U.S.A.">
        <title>Genomic anatomy of Escherichia coli O157:H7 outbreaks.</title>
        <authorList>
            <person name="Eppinger M."/>
            <person name="Mammel M.K."/>
            <person name="Leclerc J.E."/>
            <person name="Ravel J."/>
            <person name="Cebula T.A."/>
        </authorList>
    </citation>
    <scope>NUCLEOTIDE SEQUENCE [LARGE SCALE GENOMIC DNA]</scope>
    <source>
        <strain>EC4115 / EHEC</strain>
    </source>
</reference>
<accession>B5YVK6</accession>
<sequence length="324" mass="35396">MKPSVILYKALPDDLLQRLQEHFTVHQVANLSPQTVEQNAAIFAEAEGLLGSNENVDAALLEKMPKLRATSTISVGYDNFDVDALTARKILLMHTPTVLTETVADTLMALVLSTARRVVEVAERVKAGEWTASIGPDWYGTDVHHKTLGIVGMGRIGMALAQRAHFGFNMPILYNARRHHKEAEERFNARYCDLDTLLQESDFVCLILPLTDETHHLFGAEQFAKMKSSAIFINAGRGPVVDENALIAALQKGEIHAAGLDVFEQEPLSVDSPLLSMANVVAVPHIGSATHETRYGMAACAVDNLIDALQGKVEKNCVNPHVAD</sequence>
<organism>
    <name type="scientific">Escherichia coli O157:H7 (strain EC4115 / EHEC)</name>
    <dbReference type="NCBI Taxonomy" id="444450"/>
    <lineage>
        <taxon>Bacteria</taxon>
        <taxon>Pseudomonadati</taxon>
        <taxon>Pseudomonadota</taxon>
        <taxon>Gammaproteobacteria</taxon>
        <taxon>Enterobacterales</taxon>
        <taxon>Enterobacteriaceae</taxon>
        <taxon>Escherichia</taxon>
    </lineage>
</organism>
<protein>
    <recommendedName>
        <fullName evidence="1">Glyoxylate/hydroxypyruvate reductase B</fullName>
        <ecNumber evidence="1">1.1.1.79</ecNumber>
        <ecNumber evidence="1">1.1.1.81</ecNumber>
    </recommendedName>
</protein>
<comment type="function">
    <text evidence="1">Catalyzes the NADPH-dependent reduction of glyoxylate and hydroxypyruvate into glycolate and glycerate, respectively.</text>
</comment>
<comment type="catalytic activity">
    <reaction evidence="1">
        <text>glycolate + NADP(+) = glyoxylate + NADPH + H(+)</text>
        <dbReference type="Rhea" id="RHEA:10992"/>
        <dbReference type="ChEBI" id="CHEBI:15378"/>
        <dbReference type="ChEBI" id="CHEBI:29805"/>
        <dbReference type="ChEBI" id="CHEBI:36655"/>
        <dbReference type="ChEBI" id="CHEBI:57783"/>
        <dbReference type="ChEBI" id="CHEBI:58349"/>
        <dbReference type="EC" id="1.1.1.79"/>
    </reaction>
</comment>
<comment type="catalytic activity">
    <reaction evidence="1">
        <text>(R)-glycerate + NAD(+) = 3-hydroxypyruvate + NADH + H(+)</text>
        <dbReference type="Rhea" id="RHEA:17905"/>
        <dbReference type="ChEBI" id="CHEBI:15378"/>
        <dbReference type="ChEBI" id="CHEBI:16659"/>
        <dbReference type="ChEBI" id="CHEBI:17180"/>
        <dbReference type="ChEBI" id="CHEBI:57540"/>
        <dbReference type="ChEBI" id="CHEBI:57945"/>
        <dbReference type="EC" id="1.1.1.81"/>
    </reaction>
</comment>
<comment type="catalytic activity">
    <reaction evidence="1">
        <text>(R)-glycerate + NADP(+) = 3-hydroxypyruvate + NADPH + H(+)</text>
        <dbReference type="Rhea" id="RHEA:18657"/>
        <dbReference type="ChEBI" id="CHEBI:15378"/>
        <dbReference type="ChEBI" id="CHEBI:16659"/>
        <dbReference type="ChEBI" id="CHEBI:17180"/>
        <dbReference type="ChEBI" id="CHEBI:57783"/>
        <dbReference type="ChEBI" id="CHEBI:58349"/>
        <dbReference type="EC" id="1.1.1.81"/>
    </reaction>
</comment>
<comment type="subunit">
    <text evidence="1">Homodimer.</text>
</comment>
<comment type="subcellular location">
    <subcellularLocation>
        <location evidence="1">Cytoplasm</location>
    </subcellularLocation>
</comment>
<comment type="similarity">
    <text evidence="1">Belongs to the D-isomer specific 2-hydroxyacid dehydrogenase family. GhrB subfamily.</text>
</comment>
<proteinExistence type="inferred from homology"/>
<feature type="chain" id="PRO_1000187285" description="Glyoxylate/hydroxypyruvate reductase B">
    <location>
        <begin position="1"/>
        <end position="324"/>
    </location>
</feature>
<feature type="active site" evidence="1">
    <location>
        <position position="237"/>
    </location>
</feature>
<feature type="active site" evidence="1">
    <location>
        <position position="266"/>
    </location>
</feature>
<feature type="active site" description="Proton donor" evidence="1">
    <location>
        <position position="285"/>
    </location>
</feature>
<gene>
    <name evidence="1" type="primary">ghrB</name>
    <name type="ordered locus">ECH74115_4929</name>
</gene>
<dbReference type="EC" id="1.1.1.79" evidence="1"/>
<dbReference type="EC" id="1.1.1.81" evidence="1"/>
<dbReference type="EMBL" id="CP001164">
    <property type="protein sequence ID" value="ACI34600.1"/>
    <property type="molecule type" value="Genomic_DNA"/>
</dbReference>
<dbReference type="RefSeq" id="WP_000805027.1">
    <property type="nucleotide sequence ID" value="NC_011353.1"/>
</dbReference>
<dbReference type="SMR" id="B5YVK6"/>
<dbReference type="GeneID" id="75203026"/>
<dbReference type="KEGG" id="ecf:ECH74115_4929"/>
<dbReference type="HOGENOM" id="CLU_019796_1_2_6"/>
<dbReference type="GO" id="GO:0005829">
    <property type="term" value="C:cytosol"/>
    <property type="evidence" value="ECO:0007669"/>
    <property type="project" value="TreeGrafter"/>
</dbReference>
<dbReference type="GO" id="GO:0005886">
    <property type="term" value="C:plasma membrane"/>
    <property type="evidence" value="ECO:0007669"/>
    <property type="project" value="UniProtKB-UniRule"/>
</dbReference>
<dbReference type="GO" id="GO:0030267">
    <property type="term" value="F:glyoxylate reductase (NADPH) activity"/>
    <property type="evidence" value="ECO:0007669"/>
    <property type="project" value="UniProtKB-UniRule"/>
</dbReference>
<dbReference type="GO" id="GO:0008465">
    <property type="term" value="F:hydroxypyruvate reductase (NADH) activity"/>
    <property type="evidence" value="ECO:0007669"/>
    <property type="project" value="RHEA"/>
</dbReference>
<dbReference type="GO" id="GO:0120509">
    <property type="term" value="F:hydroxypyruvate reductase (NADPH) activity"/>
    <property type="evidence" value="ECO:0007669"/>
    <property type="project" value="RHEA"/>
</dbReference>
<dbReference type="GO" id="GO:0051287">
    <property type="term" value="F:NAD binding"/>
    <property type="evidence" value="ECO:0007669"/>
    <property type="project" value="InterPro"/>
</dbReference>
<dbReference type="CDD" id="cd05301">
    <property type="entry name" value="GDH"/>
    <property type="match status" value="1"/>
</dbReference>
<dbReference type="FunFam" id="3.40.50.720:FF:000026">
    <property type="entry name" value="Glyoxylate/hydroxypyruvate reductase B"/>
    <property type="match status" value="1"/>
</dbReference>
<dbReference type="Gene3D" id="3.40.50.720">
    <property type="entry name" value="NAD(P)-binding Rossmann-like Domain"/>
    <property type="match status" value="2"/>
</dbReference>
<dbReference type="HAMAP" id="MF_01667">
    <property type="entry name" value="2_Hacid_dh_C_GhrB"/>
    <property type="match status" value="1"/>
</dbReference>
<dbReference type="InterPro" id="IPR050223">
    <property type="entry name" value="D-isomer_2-hydroxyacid_DH"/>
</dbReference>
<dbReference type="InterPro" id="IPR006139">
    <property type="entry name" value="D-isomer_2_OHA_DH_cat_dom"/>
</dbReference>
<dbReference type="InterPro" id="IPR029753">
    <property type="entry name" value="D-isomer_DH_CS"/>
</dbReference>
<dbReference type="InterPro" id="IPR006140">
    <property type="entry name" value="D-isomer_DH_NAD-bd"/>
</dbReference>
<dbReference type="InterPro" id="IPR023756">
    <property type="entry name" value="Glyo/OHPyrv_Rdtase_B"/>
</dbReference>
<dbReference type="InterPro" id="IPR036291">
    <property type="entry name" value="NAD(P)-bd_dom_sf"/>
</dbReference>
<dbReference type="NCBIfam" id="NF011938">
    <property type="entry name" value="PRK15409.1"/>
    <property type="match status" value="1"/>
</dbReference>
<dbReference type="PANTHER" id="PTHR10996">
    <property type="entry name" value="2-HYDROXYACID DEHYDROGENASE-RELATED"/>
    <property type="match status" value="1"/>
</dbReference>
<dbReference type="PANTHER" id="PTHR10996:SF283">
    <property type="entry name" value="GLYOXYLATE_HYDROXYPYRUVATE REDUCTASE B"/>
    <property type="match status" value="1"/>
</dbReference>
<dbReference type="Pfam" id="PF00389">
    <property type="entry name" value="2-Hacid_dh"/>
    <property type="match status" value="1"/>
</dbReference>
<dbReference type="Pfam" id="PF02826">
    <property type="entry name" value="2-Hacid_dh_C"/>
    <property type="match status" value="1"/>
</dbReference>
<dbReference type="SUPFAM" id="SSF52283">
    <property type="entry name" value="Formate/glycerate dehydrogenase catalytic domain-like"/>
    <property type="match status" value="1"/>
</dbReference>
<dbReference type="SUPFAM" id="SSF51735">
    <property type="entry name" value="NAD(P)-binding Rossmann-fold domains"/>
    <property type="match status" value="1"/>
</dbReference>
<dbReference type="PROSITE" id="PS00670">
    <property type="entry name" value="D_2_HYDROXYACID_DH_2"/>
    <property type="match status" value="1"/>
</dbReference>
<dbReference type="PROSITE" id="PS00671">
    <property type="entry name" value="D_2_HYDROXYACID_DH_3"/>
    <property type="match status" value="1"/>
</dbReference>
<evidence type="ECO:0000255" key="1">
    <source>
        <dbReference type="HAMAP-Rule" id="MF_01667"/>
    </source>
</evidence>
<name>GHRB_ECO5E</name>